<name>IER5L_XENTR</name>
<comment type="similarity">
    <text evidence="1">Belongs to the IER family.</text>
</comment>
<gene>
    <name type="primary">ier5l</name>
    <name type="ORF">TGas092c17.1</name>
</gene>
<protein>
    <recommendedName>
        <fullName>Immediate early response gene 5-like protein</fullName>
    </recommendedName>
</protein>
<dbReference type="EMBL" id="CR848131">
    <property type="protein sequence ID" value="CAJ82483.1"/>
    <property type="molecule type" value="mRNA"/>
</dbReference>
<dbReference type="EMBL" id="BC059766">
    <property type="protein sequence ID" value="AAH59766.1"/>
    <property type="molecule type" value="mRNA"/>
</dbReference>
<dbReference type="RefSeq" id="NP_988888.1">
    <property type="nucleotide sequence ID" value="NM_203557.1"/>
</dbReference>
<dbReference type="SMR" id="Q6PBC9"/>
<dbReference type="FunCoup" id="Q6PBC9">
    <property type="interactions" value="38"/>
</dbReference>
<dbReference type="STRING" id="8364.ENSXETP00000012931"/>
<dbReference type="PaxDb" id="8364-ENSXETP00000030790"/>
<dbReference type="DNASU" id="394483"/>
<dbReference type="GeneID" id="394483"/>
<dbReference type="KEGG" id="xtr:394483"/>
<dbReference type="AGR" id="Xenbase:XB-GENE-974858"/>
<dbReference type="CTD" id="389792"/>
<dbReference type="Xenbase" id="XB-GENE-974858">
    <property type="gene designation" value="ier5l"/>
</dbReference>
<dbReference type="eggNOG" id="ENOG502QUU4">
    <property type="taxonomic scope" value="Eukaryota"/>
</dbReference>
<dbReference type="HOGENOM" id="CLU_057338_1_0_1"/>
<dbReference type="InParanoid" id="Q6PBC9"/>
<dbReference type="OMA" id="QDCCCDA"/>
<dbReference type="OrthoDB" id="6358394at2759"/>
<dbReference type="PhylomeDB" id="Q6PBC9"/>
<dbReference type="Proteomes" id="UP000008143">
    <property type="component" value="Chromosome 8"/>
</dbReference>
<dbReference type="Bgee" id="ENSXETG00000014109">
    <property type="expression patterns" value="Expressed in neurula embryo and 12 other cell types or tissues"/>
</dbReference>
<dbReference type="ExpressionAtlas" id="Q6PBC9">
    <property type="expression patterns" value="baseline"/>
</dbReference>
<dbReference type="InterPro" id="IPR008653">
    <property type="entry name" value="IER"/>
</dbReference>
<dbReference type="PANTHER" id="PTHR15895">
    <property type="entry name" value="IMMEDIATE EARLY RESPONSE GENE"/>
    <property type="match status" value="1"/>
</dbReference>
<dbReference type="Pfam" id="PF05760">
    <property type="entry name" value="IER"/>
    <property type="match status" value="1"/>
</dbReference>
<sequence>MECALDAQSLISLSLRKIHSSRTQRGGIKLHKNLLVSYVLRNARQLYLSERYAELYRRQPFPQPMEECGACDEPDIPELSPLQIPEEGEDEMHQLPRIQNGAELLEPLSSEEPLELPPCAHSPHPAKDPHSGFYSPAPSRGFCSSGDSGGLGLPQCSHTTVLDLDTHVVTTVESGYLHQDCPCQGAPRPALLTAPPKRKYAPAGYSYSGHGVAEEEEDVEPHFVPCKRGRYEDFCPQPLGEPTDSNNISNLISIFGSGFSGLMSRQSEAEQSLNGHLCGKQALASLGAWTRAIVAF</sequence>
<feature type="chain" id="PRO_0000334661" description="Immediate early response gene 5-like protein">
    <location>
        <begin position="1"/>
        <end position="296"/>
    </location>
</feature>
<keyword id="KW-1185">Reference proteome</keyword>
<proteinExistence type="evidence at transcript level"/>
<accession>Q6PBC9</accession>
<reference key="1">
    <citation type="submission" date="2006-10" db="EMBL/GenBank/DDBJ databases">
        <authorList>
            <consortium name="Sanger Xenopus tropicalis EST/cDNA project"/>
        </authorList>
    </citation>
    <scope>NUCLEOTIDE SEQUENCE [LARGE SCALE MRNA]</scope>
    <source>
        <tissue>Gastrula</tissue>
    </source>
</reference>
<reference key="2">
    <citation type="submission" date="2003-10" db="EMBL/GenBank/DDBJ databases">
        <authorList>
            <consortium name="NIH - Xenopus Gene Collection (XGC) project"/>
        </authorList>
    </citation>
    <scope>NUCLEOTIDE SEQUENCE [LARGE SCALE MRNA]</scope>
    <source>
        <tissue>Embryo</tissue>
    </source>
</reference>
<evidence type="ECO:0000305" key="1"/>
<organism>
    <name type="scientific">Xenopus tropicalis</name>
    <name type="common">Western clawed frog</name>
    <name type="synonym">Silurana tropicalis</name>
    <dbReference type="NCBI Taxonomy" id="8364"/>
    <lineage>
        <taxon>Eukaryota</taxon>
        <taxon>Metazoa</taxon>
        <taxon>Chordata</taxon>
        <taxon>Craniata</taxon>
        <taxon>Vertebrata</taxon>
        <taxon>Euteleostomi</taxon>
        <taxon>Amphibia</taxon>
        <taxon>Batrachia</taxon>
        <taxon>Anura</taxon>
        <taxon>Pipoidea</taxon>
        <taxon>Pipidae</taxon>
        <taxon>Xenopodinae</taxon>
        <taxon>Xenopus</taxon>
        <taxon>Silurana</taxon>
    </lineage>
</organism>